<organism>
    <name type="scientific">Geotalea daltonii (strain DSM 22248 / JCM 15807 / FRC-32)</name>
    <name type="common">Geobacter daltonii</name>
    <dbReference type="NCBI Taxonomy" id="316067"/>
    <lineage>
        <taxon>Bacteria</taxon>
        <taxon>Pseudomonadati</taxon>
        <taxon>Thermodesulfobacteriota</taxon>
        <taxon>Desulfuromonadia</taxon>
        <taxon>Geobacterales</taxon>
        <taxon>Geobacteraceae</taxon>
        <taxon>Geotalea</taxon>
    </lineage>
</organism>
<sequence>MAKKITGYIKLQVPAGKANPAPPIGPALGQHGVNIMEFCKAFNAKTQADEGTITPVVITVYADRSFTFVTKTPPASVLIKKALGIESGSSVPNKNKVGKLTKAQVQEIASKKMPDLNAASLEAAMKTIEGTARSMGVEIV</sequence>
<dbReference type="EMBL" id="CP001390">
    <property type="protein sequence ID" value="ACM21977.1"/>
    <property type="molecule type" value="Genomic_DNA"/>
</dbReference>
<dbReference type="RefSeq" id="WP_012648704.1">
    <property type="nucleotide sequence ID" value="NC_011979.1"/>
</dbReference>
<dbReference type="SMR" id="B9M6V6"/>
<dbReference type="STRING" id="316067.Geob_3636"/>
<dbReference type="KEGG" id="geo:Geob_3636"/>
<dbReference type="eggNOG" id="COG0080">
    <property type="taxonomic scope" value="Bacteria"/>
</dbReference>
<dbReference type="HOGENOM" id="CLU_074237_2_1_7"/>
<dbReference type="OrthoDB" id="9802408at2"/>
<dbReference type="Proteomes" id="UP000007721">
    <property type="component" value="Chromosome"/>
</dbReference>
<dbReference type="GO" id="GO:0022625">
    <property type="term" value="C:cytosolic large ribosomal subunit"/>
    <property type="evidence" value="ECO:0007669"/>
    <property type="project" value="TreeGrafter"/>
</dbReference>
<dbReference type="GO" id="GO:0070180">
    <property type="term" value="F:large ribosomal subunit rRNA binding"/>
    <property type="evidence" value="ECO:0007669"/>
    <property type="project" value="UniProtKB-UniRule"/>
</dbReference>
<dbReference type="GO" id="GO:0003735">
    <property type="term" value="F:structural constituent of ribosome"/>
    <property type="evidence" value="ECO:0007669"/>
    <property type="project" value="InterPro"/>
</dbReference>
<dbReference type="GO" id="GO:0006412">
    <property type="term" value="P:translation"/>
    <property type="evidence" value="ECO:0007669"/>
    <property type="project" value="UniProtKB-UniRule"/>
</dbReference>
<dbReference type="CDD" id="cd00349">
    <property type="entry name" value="Ribosomal_L11"/>
    <property type="match status" value="1"/>
</dbReference>
<dbReference type="FunFam" id="1.10.10.250:FF:000001">
    <property type="entry name" value="50S ribosomal protein L11"/>
    <property type="match status" value="1"/>
</dbReference>
<dbReference type="FunFam" id="3.30.1550.10:FF:000001">
    <property type="entry name" value="50S ribosomal protein L11"/>
    <property type="match status" value="1"/>
</dbReference>
<dbReference type="Gene3D" id="1.10.10.250">
    <property type="entry name" value="Ribosomal protein L11, C-terminal domain"/>
    <property type="match status" value="1"/>
</dbReference>
<dbReference type="Gene3D" id="3.30.1550.10">
    <property type="entry name" value="Ribosomal protein L11/L12, N-terminal domain"/>
    <property type="match status" value="1"/>
</dbReference>
<dbReference type="HAMAP" id="MF_00736">
    <property type="entry name" value="Ribosomal_uL11"/>
    <property type="match status" value="1"/>
</dbReference>
<dbReference type="InterPro" id="IPR000911">
    <property type="entry name" value="Ribosomal_uL11"/>
</dbReference>
<dbReference type="InterPro" id="IPR006519">
    <property type="entry name" value="Ribosomal_uL11_bac-typ"/>
</dbReference>
<dbReference type="InterPro" id="IPR020783">
    <property type="entry name" value="Ribosomal_uL11_C"/>
</dbReference>
<dbReference type="InterPro" id="IPR036769">
    <property type="entry name" value="Ribosomal_uL11_C_sf"/>
</dbReference>
<dbReference type="InterPro" id="IPR020784">
    <property type="entry name" value="Ribosomal_uL11_N"/>
</dbReference>
<dbReference type="InterPro" id="IPR036796">
    <property type="entry name" value="Ribosomal_uL11_N_sf"/>
</dbReference>
<dbReference type="NCBIfam" id="TIGR01632">
    <property type="entry name" value="L11_bact"/>
    <property type="match status" value="1"/>
</dbReference>
<dbReference type="PANTHER" id="PTHR11661">
    <property type="entry name" value="60S RIBOSOMAL PROTEIN L12"/>
    <property type="match status" value="1"/>
</dbReference>
<dbReference type="PANTHER" id="PTHR11661:SF1">
    <property type="entry name" value="LARGE RIBOSOMAL SUBUNIT PROTEIN UL11M"/>
    <property type="match status" value="1"/>
</dbReference>
<dbReference type="Pfam" id="PF00298">
    <property type="entry name" value="Ribosomal_L11"/>
    <property type="match status" value="1"/>
</dbReference>
<dbReference type="Pfam" id="PF03946">
    <property type="entry name" value="Ribosomal_L11_N"/>
    <property type="match status" value="1"/>
</dbReference>
<dbReference type="SMART" id="SM00649">
    <property type="entry name" value="RL11"/>
    <property type="match status" value="1"/>
</dbReference>
<dbReference type="SUPFAM" id="SSF54747">
    <property type="entry name" value="Ribosomal L11/L12e N-terminal domain"/>
    <property type="match status" value="1"/>
</dbReference>
<dbReference type="SUPFAM" id="SSF46906">
    <property type="entry name" value="Ribosomal protein L11, C-terminal domain"/>
    <property type="match status" value="1"/>
</dbReference>
<gene>
    <name evidence="1" type="primary">rplK</name>
    <name type="ordered locus">Geob_3636</name>
</gene>
<protein>
    <recommendedName>
        <fullName evidence="1">Large ribosomal subunit protein uL11</fullName>
    </recommendedName>
    <alternativeName>
        <fullName evidence="2">50S ribosomal protein L11</fullName>
    </alternativeName>
</protein>
<accession>B9M6V6</accession>
<proteinExistence type="inferred from homology"/>
<feature type="chain" id="PRO_1000195645" description="Large ribosomal subunit protein uL11">
    <location>
        <begin position="1"/>
        <end position="140"/>
    </location>
</feature>
<name>RL11_GEODF</name>
<comment type="function">
    <text evidence="1">Forms part of the ribosomal stalk which helps the ribosome interact with GTP-bound translation factors.</text>
</comment>
<comment type="subunit">
    <text evidence="1">Part of the ribosomal stalk of the 50S ribosomal subunit. Interacts with L10 and the large rRNA to form the base of the stalk. L10 forms an elongated spine to which L12 dimers bind in a sequential fashion forming a multimeric L10(L12)X complex.</text>
</comment>
<comment type="PTM">
    <text evidence="1">One or more lysine residues are methylated.</text>
</comment>
<comment type="similarity">
    <text evidence="1">Belongs to the universal ribosomal protein uL11 family.</text>
</comment>
<keyword id="KW-0488">Methylation</keyword>
<keyword id="KW-1185">Reference proteome</keyword>
<keyword id="KW-0687">Ribonucleoprotein</keyword>
<keyword id="KW-0689">Ribosomal protein</keyword>
<keyword id="KW-0694">RNA-binding</keyword>
<keyword id="KW-0699">rRNA-binding</keyword>
<evidence type="ECO:0000255" key="1">
    <source>
        <dbReference type="HAMAP-Rule" id="MF_00736"/>
    </source>
</evidence>
<evidence type="ECO:0000305" key="2"/>
<reference key="1">
    <citation type="submission" date="2009-01" db="EMBL/GenBank/DDBJ databases">
        <title>Complete sequence of Geobacter sp. FRC-32.</title>
        <authorList>
            <consortium name="US DOE Joint Genome Institute"/>
            <person name="Lucas S."/>
            <person name="Copeland A."/>
            <person name="Lapidus A."/>
            <person name="Glavina del Rio T."/>
            <person name="Dalin E."/>
            <person name="Tice H."/>
            <person name="Bruce D."/>
            <person name="Goodwin L."/>
            <person name="Pitluck S."/>
            <person name="Saunders E."/>
            <person name="Brettin T."/>
            <person name="Detter J.C."/>
            <person name="Han C."/>
            <person name="Larimer F."/>
            <person name="Land M."/>
            <person name="Hauser L."/>
            <person name="Kyrpides N."/>
            <person name="Ovchinnikova G."/>
            <person name="Kostka J."/>
            <person name="Richardson P."/>
        </authorList>
    </citation>
    <scope>NUCLEOTIDE SEQUENCE [LARGE SCALE GENOMIC DNA]</scope>
    <source>
        <strain>DSM 22248 / JCM 15807 / FRC-32</strain>
    </source>
</reference>